<accession>P56104</accession>
<comment type="function">
    <text evidence="1">Catalyzes the reversible transfer of the terminal phosphate group between ATP and AMP. Plays an important role in cellular energy homeostasis and in adenine nucleotide metabolism.</text>
</comment>
<comment type="catalytic activity">
    <reaction evidence="1">
        <text>AMP + ATP = 2 ADP</text>
        <dbReference type="Rhea" id="RHEA:12973"/>
        <dbReference type="ChEBI" id="CHEBI:30616"/>
        <dbReference type="ChEBI" id="CHEBI:456215"/>
        <dbReference type="ChEBI" id="CHEBI:456216"/>
        <dbReference type="EC" id="2.7.4.3"/>
    </reaction>
</comment>
<comment type="pathway">
    <text evidence="1">Purine metabolism; AMP biosynthesis via salvage pathway; AMP from ADP: step 1/1.</text>
</comment>
<comment type="subunit">
    <text evidence="1">Monomer.</text>
</comment>
<comment type="subcellular location">
    <subcellularLocation>
        <location evidence="1">Cytoplasm</location>
    </subcellularLocation>
</comment>
<comment type="domain">
    <text evidence="1">Consists of three domains, a large central CORE domain and two small peripheral domains, NMPbind and LID, which undergo movements during catalysis. The LID domain closes over the site of phosphoryl transfer upon ATP binding. Assembling and dissambling the active center during each catalytic cycle provides an effective means to prevent ATP hydrolysis.</text>
</comment>
<comment type="similarity">
    <text evidence="1">Belongs to the adenylate kinase family.</text>
</comment>
<protein>
    <recommendedName>
        <fullName evidence="1">Adenylate kinase</fullName>
        <shortName evidence="1">AK</shortName>
        <ecNumber evidence="1">2.7.4.3</ecNumber>
    </recommendedName>
    <alternativeName>
        <fullName evidence="1">ATP-AMP transphosphorylase</fullName>
    </alternativeName>
    <alternativeName>
        <fullName evidence="1">ATP:AMP phosphotransferase</fullName>
    </alternativeName>
    <alternativeName>
        <fullName evidence="1">Adenylate monophosphate kinase</fullName>
    </alternativeName>
</protein>
<dbReference type="EC" id="2.7.4.3" evidence="1"/>
<dbReference type="EMBL" id="AE000511">
    <property type="protein sequence ID" value="AAD07683.1"/>
    <property type="molecule type" value="Genomic_DNA"/>
</dbReference>
<dbReference type="PIR" id="B64597">
    <property type="entry name" value="B64597"/>
</dbReference>
<dbReference type="RefSeq" id="NP_207413.1">
    <property type="nucleotide sequence ID" value="NC_000915.1"/>
</dbReference>
<dbReference type="RefSeq" id="WP_000811238.1">
    <property type="nucleotide sequence ID" value="NC_018939.1"/>
</dbReference>
<dbReference type="SMR" id="P56104"/>
<dbReference type="DIP" id="DIP-3547N"/>
<dbReference type="FunCoup" id="P56104">
    <property type="interactions" value="383"/>
</dbReference>
<dbReference type="IntAct" id="P56104">
    <property type="interactions" value="1"/>
</dbReference>
<dbReference type="MINT" id="P56104"/>
<dbReference type="STRING" id="85962.HP_0618"/>
<dbReference type="PaxDb" id="85962-C694_03195"/>
<dbReference type="EnsemblBacteria" id="AAD07683">
    <property type="protein sequence ID" value="AAD07683"/>
    <property type="gene ID" value="HP_0618"/>
</dbReference>
<dbReference type="KEGG" id="heo:C694_03195"/>
<dbReference type="KEGG" id="hpy:HP_0618"/>
<dbReference type="PATRIC" id="fig|85962.47.peg.666"/>
<dbReference type="eggNOG" id="COG0563">
    <property type="taxonomic scope" value="Bacteria"/>
</dbReference>
<dbReference type="InParanoid" id="P56104"/>
<dbReference type="OrthoDB" id="9805030at2"/>
<dbReference type="PhylomeDB" id="P56104"/>
<dbReference type="UniPathway" id="UPA00588">
    <property type="reaction ID" value="UER00649"/>
</dbReference>
<dbReference type="Proteomes" id="UP000000429">
    <property type="component" value="Chromosome"/>
</dbReference>
<dbReference type="GO" id="GO:0005737">
    <property type="term" value="C:cytoplasm"/>
    <property type="evidence" value="ECO:0000318"/>
    <property type="project" value="GO_Central"/>
</dbReference>
<dbReference type="GO" id="GO:0005829">
    <property type="term" value="C:cytosol"/>
    <property type="evidence" value="ECO:0000318"/>
    <property type="project" value="GO_Central"/>
</dbReference>
<dbReference type="GO" id="GO:0004017">
    <property type="term" value="F:adenylate kinase activity"/>
    <property type="evidence" value="ECO:0000318"/>
    <property type="project" value="GO_Central"/>
</dbReference>
<dbReference type="GO" id="GO:0005524">
    <property type="term" value="F:ATP binding"/>
    <property type="evidence" value="ECO:0007669"/>
    <property type="project" value="UniProtKB-UniRule"/>
</dbReference>
<dbReference type="GO" id="GO:0004550">
    <property type="term" value="F:nucleoside diphosphate kinase activity"/>
    <property type="evidence" value="ECO:0000318"/>
    <property type="project" value="GO_Central"/>
</dbReference>
<dbReference type="GO" id="GO:0044209">
    <property type="term" value="P:AMP salvage"/>
    <property type="evidence" value="ECO:0007669"/>
    <property type="project" value="UniProtKB-UniRule"/>
</dbReference>
<dbReference type="GO" id="GO:0009132">
    <property type="term" value="P:nucleoside diphosphate metabolic process"/>
    <property type="evidence" value="ECO:0000318"/>
    <property type="project" value="GO_Central"/>
</dbReference>
<dbReference type="GO" id="GO:0009123">
    <property type="term" value="P:nucleoside monophosphate metabolic process"/>
    <property type="evidence" value="ECO:0000318"/>
    <property type="project" value="GO_Central"/>
</dbReference>
<dbReference type="CDD" id="cd01428">
    <property type="entry name" value="ADK"/>
    <property type="match status" value="1"/>
</dbReference>
<dbReference type="Gene3D" id="3.40.50.300">
    <property type="entry name" value="P-loop containing nucleotide triphosphate hydrolases"/>
    <property type="match status" value="1"/>
</dbReference>
<dbReference type="HAMAP" id="MF_00235">
    <property type="entry name" value="Adenylate_kinase_Adk"/>
    <property type="match status" value="1"/>
</dbReference>
<dbReference type="InterPro" id="IPR000850">
    <property type="entry name" value="Adenylat/UMP-CMP_kin"/>
</dbReference>
<dbReference type="InterPro" id="IPR033690">
    <property type="entry name" value="Adenylat_kinase_CS"/>
</dbReference>
<dbReference type="InterPro" id="IPR027417">
    <property type="entry name" value="P-loop_NTPase"/>
</dbReference>
<dbReference type="NCBIfam" id="NF001384">
    <property type="entry name" value="PRK00279.2-2"/>
    <property type="match status" value="1"/>
</dbReference>
<dbReference type="PANTHER" id="PTHR23359">
    <property type="entry name" value="NUCLEOTIDE KINASE"/>
    <property type="match status" value="1"/>
</dbReference>
<dbReference type="Pfam" id="PF00406">
    <property type="entry name" value="ADK"/>
    <property type="match status" value="1"/>
</dbReference>
<dbReference type="PRINTS" id="PR00094">
    <property type="entry name" value="ADENYLTKNASE"/>
</dbReference>
<dbReference type="SUPFAM" id="SSF52540">
    <property type="entry name" value="P-loop containing nucleoside triphosphate hydrolases"/>
    <property type="match status" value="1"/>
</dbReference>
<dbReference type="PROSITE" id="PS00113">
    <property type="entry name" value="ADENYLATE_KINASE"/>
    <property type="match status" value="1"/>
</dbReference>
<organism>
    <name type="scientific">Helicobacter pylori (strain ATCC 700392 / 26695)</name>
    <name type="common">Campylobacter pylori</name>
    <dbReference type="NCBI Taxonomy" id="85962"/>
    <lineage>
        <taxon>Bacteria</taxon>
        <taxon>Pseudomonadati</taxon>
        <taxon>Campylobacterota</taxon>
        <taxon>Epsilonproteobacteria</taxon>
        <taxon>Campylobacterales</taxon>
        <taxon>Helicobacteraceae</taxon>
        <taxon>Helicobacter</taxon>
    </lineage>
</organism>
<sequence length="191" mass="21243">MKQLFLIIGAPGSGKTTDAELIAKNNSETIAHFSTGDLLRAESAKKTERGLLIEKFTSQGELVPLEIVVETILSAIKSSGKGIILIDGYPRSVEQMQALDKELNAQNEVILKSVIEVEVSENTAKERVLGRSRGADDNEKVFHNRMRVFLDPLGEIQNFYKNKKVYKAIDGERSIEEIVGEMQEYILSFGN</sequence>
<evidence type="ECO:0000255" key="1">
    <source>
        <dbReference type="HAMAP-Rule" id="MF_00235"/>
    </source>
</evidence>
<feature type="chain" id="PRO_0000158778" description="Adenylate kinase">
    <location>
        <begin position="1"/>
        <end position="191"/>
    </location>
</feature>
<feature type="region of interest" description="NMP" evidence="1">
    <location>
        <begin position="34"/>
        <end position="63"/>
    </location>
</feature>
<feature type="region of interest" description="LID" evidence="1">
    <location>
        <begin position="130"/>
        <end position="136"/>
    </location>
</feature>
<feature type="binding site" evidence="1">
    <location>
        <begin position="12"/>
        <end position="17"/>
    </location>
    <ligand>
        <name>ATP</name>
        <dbReference type="ChEBI" id="CHEBI:30616"/>
    </ligand>
</feature>
<feature type="binding site" evidence="1">
    <location>
        <position position="35"/>
    </location>
    <ligand>
        <name>AMP</name>
        <dbReference type="ChEBI" id="CHEBI:456215"/>
    </ligand>
</feature>
<feature type="binding site" evidence="1">
    <location>
        <position position="40"/>
    </location>
    <ligand>
        <name>AMP</name>
        <dbReference type="ChEBI" id="CHEBI:456215"/>
    </ligand>
</feature>
<feature type="binding site" evidence="1">
    <location>
        <begin position="61"/>
        <end position="63"/>
    </location>
    <ligand>
        <name>AMP</name>
        <dbReference type="ChEBI" id="CHEBI:456215"/>
    </ligand>
</feature>
<feature type="binding site" evidence="1">
    <location>
        <begin position="88"/>
        <end position="91"/>
    </location>
    <ligand>
        <name>AMP</name>
        <dbReference type="ChEBI" id="CHEBI:456215"/>
    </ligand>
</feature>
<feature type="binding site" evidence="1">
    <location>
        <position position="95"/>
    </location>
    <ligand>
        <name>AMP</name>
        <dbReference type="ChEBI" id="CHEBI:456215"/>
    </ligand>
</feature>
<feature type="binding site" evidence="1">
    <location>
        <position position="131"/>
    </location>
    <ligand>
        <name>ATP</name>
        <dbReference type="ChEBI" id="CHEBI:30616"/>
    </ligand>
</feature>
<feature type="binding site" evidence="1">
    <location>
        <position position="133"/>
    </location>
    <ligand>
        <name>AMP</name>
        <dbReference type="ChEBI" id="CHEBI:456215"/>
    </ligand>
</feature>
<feature type="binding site" evidence="1">
    <location>
        <position position="145"/>
    </location>
    <ligand>
        <name>AMP</name>
        <dbReference type="ChEBI" id="CHEBI:456215"/>
    </ligand>
</feature>
<feature type="binding site" evidence="1">
    <location>
        <position position="173"/>
    </location>
    <ligand>
        <name>ATP</name>
        <dbReference type="ChEBI" id="CHEBI:30616"/>
    </ligand>
</feature>
<name>KAD_HELPY</name>
<gene>
    <name evidence="1" type="primary">adk</name>
    <name type="ordered locus">HP_0618</name>
</gene>
<proteinExistence type="inferred from homology"/>
<reference key="1">
    <citation type="journal article" date="1997" name="Nature">
        <title>The complete genome sequence of the gastric pathogen Helicobacter pylori.</title>
        <authorList>
            <person name="Tomb J.-F."/>
            <person name="White O."/>
            <person name="Kerlavage A.R."/>
            <person name="Clayton R.A."/>
            <person name="Sutton G.G."/>
            <person name="Fleischmann R.D."/>
            <person name="Ketchum K.A."/>
            <person name="Klenk H.-P."/>
            <person name="Gill S.R."/>
            <person name="Dougherty B.A."/>
            <person name="Nelson K.E."/>
            <person name="Quackenbush J."/>
            <person name="Zhou L."/>
            <person name="Kirkness E.F."/>
            <person name="Peterson S.N."/>
            <person name="Loftus B.J."/>
            <person name="Richardson D.L."/>
            <person name="Dodson R.J."/>
            <person name="Khalak H.G."/>
            <person name="Glodek A."/>
            <person name="McKenney K."/>
            <person name="FitzGerald L.M."/>
            <person name="Lee N."/>
            <person name="Adams M.D."/>
            <person name="Hickey E.K."/>
            <person name="Berg D.E."/>
            <person name="Gocayne J.D."/>
            <person name="Utterback T.R."/>
            <person name="Peterson J.D."/>
            <person name="Kelley J.M."/>
            <person name="Cotton M.D."/>
            <person name="Weidman J.F."/>
            <person name="Fujii C."/>
            <person name="Bowman C."/>
            <person name="Watthey L."/>
            <person name="Wallin E."/>
            <person name="Hayes W.S."/>
            <person name="Borodovsky M."/>
            <person name="Karp P.D."/>
            <person name="Smith H.O."/>
            <person name="Fraser C.M."/>
            <person name="Venter J.C."/>
        </authorList>
    </citation>
    <scope>NUCLEOTIDE SEQUENCE [LARGE SCALE GENOMIC DNA]</scope>
    <source>
        <strain>ATCC 700392 / 26695</strain>
    </source>
</reference>
<keyword id="KW-0067">ATP-binding</keyword>
<keyword id="KW-0963">Cytoplasm</keyword>
<keyword id="KW-0418">Kinase</keyword>
<keyword id="KW-0545">Nucleotide biosynthesis</keyword>
<keyword id="KW-0547">Nucleotide-binding</keyword>
<keyword id="KW-1185">Reference proteome</keyword>
<keyword id="KW-0808">Transferase</keyword>